<evidence type="ECO:0000255" key="1"/>
<evidence type="ECO:0000256" key="2">
    <source>
        <dbReference type="SAM" id="MobiDB-lite"/>
    </source>
</evidence>
<evidence type="ECO:0000305" key="3"/>
<dbReference type="EMBL" id="AJ720457">
    <property type="protein sequence ID" value="CAG32116.1"/>
    <property type="molecule type" value="mRNA"/>
</dbReference>
<dbReference type="RefSeq" id="NP_001034396.1">
    <property type="nucleotide sequence ID" value="NM_001039307.2"/>
</dbReference>
<dbReference type="SMR" id="Q5ZJH7"/>
<dbReference type="FunCoup" id="Q5ZJH7">
    <property type="interactions" value="1311"/>
</dbReference>
<dbReference type="STRING" id="9031.ENSGALP00000018487"/>
<dbReference type="GeneID" id="424204"/>
<dbReference type="KEGG" id="gga:424204"/>
<dbReference type="CTD" id="27013"/>
<dbReference type="VEuPathDB" id="HostDB:geneid_424204"/>
<dbReference type="InParanoid" id="Q5ZJH7"/>
<dbReference type="OMA" id="WPRVENQ"/>
<dbReference type="OrthoDB" id="244495at2759"/>
<dbReference type="PhylomeDB" id="Q5ZJH7"/>
<dbReference type="PRO" id="PR:Q5ZJH7"/>
<dbReference type="Proteomes" id="UP000000539">
    <property type="component" value="Chromosome 7"/>
</dbReference>
<dbReference type="Bgee" id="ENSGALG00000011343">
    <property type="expression patterns" value="Expressed in liver and 13 other cell types or tissues"/>
</dbReference>
<dbReference type="GO" id="GO:0000307">
    <property type="term" value="C:cyclin-dependent protein kinase holoenzyme complex"/>
    <property type="evidence" value="ECO:0000318"/>
    <property type="project" value="GO_Central"/>
</dbReference>
<dbReference type="GO" id="GO:0016020">
    <property type="term" value="C:membrane"/>
    <property type="evidence" value="ECO:0007669"/>
    <property type="project" value="UniProtKB-SubCell"/>
</dbReference>
<dbReference type="GO" id="GO:0005634">
    <property type="term" value="C:nucleus"/>
    <property type="evidence" value="ECO:0000318"/>
    <property type="project" value="GO_Central"/>
</dbReference>
<dbReference type="GO" id="GO:0016538">
    <property type="term" value="F:cyclin-dependent protein serine/threonine kinase regulator activity"/>
    <property type="evidence" value="ECO:0000318"/>
    <property type="project" value="GO_Central"/>
</dbReference>
<dbReference type="GO" id="GO:0019901">
    <property type="term" value="F:protein kinase binding"/>
    <property type="evidence" value="ECO:0007669"/>
    <property type="project" value="InterPro"/>
</dbReference>
<dbReference type="CDD" id="cd20557">
    <property type="entry name" value="CYCLIN_ScPCL1-like"/>
    <property type="match status" value="1"/>
</dbReference>
<dbReference type="Gene3D" id="1.10.472.10">
    <property type="entry name" value="Cyclin-like"/>
    <property type="match status" value="1"/>
</dbReference>
<dbReference type="InterPro" id="IPR013922">
    <property type="entry name" value="Cyclin_PHO80-like"/>
</dbReference>
<dbReference type="PANTHER" id="PTHR15615">
    <property type="match status" value="1"/>
</dbReference>
<dbReference type="PANTHER" id="PTHR15615:SF108">
    <property type="entry name" value="PROTEIN CNPPD1"/>
    <property type="match status" value="1"/>
</dbReference>
<dbReference type="Pfam" id="PF08613">
    <property type="entry name" value="Cyclin"/>
    <property type="match status" value="1"/>
</dbReference>
<proteinExistence type="evidence at transcript level"/>
<feature type="chain" id="PRO_0000089351" description="Protein CNPPD1">
    <location>
        <begin position="1"/>
        <end position="439"/>
    </location>
</feature>
<feature type="transmembrane region" description="Helical" evidence="1">
    <location>
        <begin position="231"/>
        <end position="251"/>
    </location>
</feature>
<feature type="region of interest" description="Disordered" evidence="2">
    <location>
        <begin position="283"/>
        <end position="302"/>
    </location>
</feature>
<reference key="1">
    <citation type="journal article" date="2005" name="Genome Biol.">
        <title>Full-length cDNAs from chicken bursal lymphocytes to facilitate gene function analysis.</title>
        <authorList>
            <person name="Caldwell R.B."/>
            <person name="Kierzek A.M."/>
            <person name="Arakawa H."/>
            <person name="Bezzubov Y."/>
            <person name="Zaim J."/>
            <person name="Fiedler P."/>
            <person name="Kutter S."/>
            <person name="Blagodatski A."/>
            <person name="Kostovska D."/>
            <person name="Koter M."/>
            <person name="Plachy J."/>
            <person name="Carninci P."/>
            <person name="Hayashizaki Y."/>
            <person name="Buerstedde J.-M."/>
        </authorList>
    </citation>
    <scope>NUCLEOTIDE SEQUENCE [LARGE SCALE MRNA]</scope>
    <source>
        <strain>CB</strain>
        <tissue>Bursa of Fabricius</tissue>
    </source>
</reference>
<keyword id="KW-0472">Membrane</keyword>
<keyword id="KW-1185">Reference proteome</keyword>
<keyword id="KW-0812">Transmembrane</keyword>
<keyword id="KW-1133">Transmembrane helix</keyword>
<sequence>MDLNGFLLDEEGAFSLSGFQEFTFLPRHQQLSERVRKRLYYGWDKECTLDNLSSPVADIAVELLQKVAPSPIRRLQKKYVSHVSREACISPCSMMLALVYIERLRHRNPEYLQQISSSDLFLISMMVASKYLYDEGEEEEVFNDEWGAAGKVDVQTMNTLEMNFLSAIDWSLYTDPRELFEVLSWLEGRVAEKQGMWRGWFTYTDLCVLMEQSMWQQALGHFYQQVVKLACLLGVVYLTGFAAVFTSIAVVHRAVCTRSTSITALRPALIPVESGCQLGAQPALAPEQPQPKLPDVSPPSSTHCLGENETAEELRRGGVTATALYLWGSVMTALSYVKAPDIALHKSPLQAPLRKVPTACERSNRTAPVTAPNQPGPFGLAVLLAPPALHCHTCSAAARPTWDATPNHRKDWLDPLGLRQCFLHAALDLGRIKSFIFPS</sequence>
<protein>
    <recommendedName>
        <fullName>Protein CNPPD1</fullName>
    </recommendedName>
</protein>
<gene>
    <name type="primary">CNPPD1</name>
    <name type="ORF">RCJMB04_3a20</name>
</gene>
<name>CNPD1_CHICK</name>
<comment type="subcellular location">
    <subcellularLocation>
        <location evidence="3">Membrane</location>
        <topology evidence="3">Single-pass membrane protein</topology>
    </subcellularLocation>
</comment>
<comment type="similarity">
    <text evidence="3">Belongs to the CNPPD1 family.</text>
</comment>
<accession>Q5ZJH7</accession>
<organism>
    <name type="scientific">Gallus gallus</name>
    <name type="common">Chicken</name>
    <dbReference type="NCBI Taxonomy" id="9031"/>
    <lineage>
        <taxon>Eukaryota</taxon>
        <taxon>Metazoa</taxon>
        <taxon>Chordata</taxon>
        <taxon>Craniata</taxon>
        <taxon>Vertebrata</taxon>
        <taxon>Euteleostomi</taxon>
        <taxon>Archelosauria</taxon>
        <taxon>Archosauria</taxon>
        <taxon>Dinosauria</taxon>
        <taxon>Saurischia</taxon>
        <taxon>Theropoda</taxon>
        <taxon>Coelurosauria</taxon>
        <taxon>Aves</taxon>
        <taxon>Neognathae</taxon>
        <taxon>Galloanserae</taxon>
        <taxon>Galliformes</taxon>
        <taxon>Phasianidae</taxon>
        <taxon>Phasianinae</taxon>
        <taxon>Gallus</taxon>
    </lineage>
</organism>